<dbReference type="EC" id="2.7.11.30"/>
<dbReference type="EMBL" id="D28526">
    <property type="protein sequence ID" value="BAA05878.1"/>
    <property type="molecule type" value="mRNA"/>
</dbReference>
<dbReference type="EMBL" id="D25540">
    <property type="protein sequence ID" value="BAA05023.1"/>
    <property type="molecule type" value="mRNA"/>
</dbReference>
<dbReference type="EMBL" id="AL772150">
    <property type="status" value="NOT_ANNOTATED_CDS"/>
    <property type="molecule type" value="Genomic_DNA"/>
</dbReference>
<dbReference type="EMBL" id="AL772232">
    <property type="status" value="NOT_ANNOTATED_CDS"/>
    <property type="molecule type" value="Genomic_DNA"/>
</dbReference>
<dbReference type="EMBL" id="BC063260">
    <property type="protein sequence ID" value="AAH63260.1"/>
    <property type="molecule type" value="mRNA"/>
</dbReference>
<dbReference type="CCDS" id="CCDS18160.1">
    <molecule id="Q64729-1"/>
</dbReference>
<dbReference type="CCDS" id="CCDS84728.1">
    <molecule id="Q64729-2"/>
</dbReference>
<dbReference type="PIR" id="JC2061">
    <property type="entry name" value="JC2061"/>
</dbReference>
<dbReference type="PIR" id="JC2062">
    <property type="entry name" value="JC2062"/>
</dbReference>
<dbReference type="RefSeq" id="NP_001299797.1">
    <molecule id="Q64729-2"/>
    <property type="nucleotide sequence ID" value="NM_001312868.2"/>
</dbReference>
<dbReference type="RefSeq" id="NP_001299798.1">
    <property type="nucleotide sequence ID" value="NM_001312869.1"/>
</dbReference>
<dbReference type="RefSeq" id="NP_033396.1">
    <molecule id="Q64729-1"/>
    <property type="nucleotide sequence ID" value="NM_009370.4"/>
</dbReference>
<dbReference type="SMR" id="Q64729"/>
<dbReference type="BioGRID" id="204163">
    <property type="interactions" value="29"/>
</dbReference>
<dbReference type="ComplexPortal" id="CPX-823">
    <property type="entry name" value="TGF-beta-1-TGFR complex"/>
</dbReference>
<dbReference type="ComplexPortal" id="CPX-826">
    <property type="entry name" value="TGF-beta-3-TGFR complex"/>
</dbReference>
<dbReference type="ComplexPortal" id="CPX-836">
    <property type="entry name" value="TGF-beta-2-TGFR complex"/>
</dbReference>
<dbReference type="CORUM" id="Q64729"/>
<dbReference type="DIP" id="DIP-42262N"/>
<dbReference type="FunCoup" id="Q64729">
    <property type="interactions" value="2259"/>
</dbReference>
<dbReference type="IntAct" id="Q64729">
    <property type="interactions" value="31"/>
</dbReference>
<dbReference type="MINT" id="Q64729"/>
<dbReference type="STRING" id="10090.ENSMUSP00000007757"/>
<dbReference type="BindingDB" id="Q64729"/>
<dbReference type="ChEMBL" id="CHEMBL2021750"/>
<dbReference type="GlyCosmos" id="Q64729">
    <property type="glycosylation" value="1 site, No reported glycans"/>
</dbReference>
<dbReference type="GlyGen" id="Q64729">
    <property type="glycosylation" value="1 site"/>
</dbReference>
<dbReference type="iPTMnet" id="Q64729"/>
<dbReference type="PhosphoSitePlus" id="Q64729"/>
<dbReference type="PaxDb" id="10090-ENSMUSP00000007757"/>
<dbReference type="ProteomicsDB" id="258866">
    <molecule id="Q64729-1"/>
</dbReference>
<dbReference type="ProteomicsDB" id="258867">
    <molecule id="Q64729-2"/>
</dbReference>
<dbReference type="Antibodypedia" id="29038">
    <property type="antibodies" value="591 antibodies from 43 providers"/>
</dbReference>
<dbReference type="DNASU" id="21812"/>
<dbReference type="Ensembl" id="ENSMUST00000007757.15">
    <molecule id="Q64729-1"/>
    <property type="protein sequence ID" value="ENSMUSP00000007757.9"/>
    <property type="gene ID" value="ENSMUSG00000007613.16"/>
</dbReference>
<dbReference type="Ensembl" id="ENSMUST00000044234.14">
    <molecule id="Q64729-2"/>
    <property type="protein sequence ID" value="ENSMUSP00000048501.8"/>
    <property type="gene ID" value="ENSMUSG00000007613.16"/>
</dbReference>
<dbReference type="GeneID" id="21812"/>
<dbReference type="KEGG" id="mmu:21812"/>
<dbReference type="UCSC" id="uc008sun.1">
    <molecule id="Q64729-1"/>
    <property type="organism name" value="mouse"/>
</dbReference>
<dbReference type="UCSC" id="uc008suo.1">
    <molecule id="Q64729-2"/>
    <property type="organism name" value="mouse"/>
</dbReference>
<dbReference type="AGR" id="MGI:98728"/>
<dbReference type="CTD" id="7046"/>
<dbReference type="MGI" id="MGI:98728">
    <property type="gene designation" value="Tgfbr1"/>
</dbReference>
<dbReference type="VEuPathDB" id="HostDB:ENSMUSG00000007613"/>
<dbReference type="eggNOG" id="KOG2052">
    <property type="taxonomic scope" value="Eukaryota"/>
</dbReference>
<dbReference type="GeneTree" id="ENSGT00940000156394"/>
<dbReference type="InParanoid" id="Q64729"/>
<dbReference type="OMA" id="VPHCCDR"/>
<dbReference type="OrthoDB" id="69842at2759"/>
<dbReference type="PhylomeDB" id="Q64729"/>
<dbReference type="TreeFam" id="TF314724"/>
<dbReference type="BRENDA" id="2.7.10.2">
    <property type="organism ID" value="3474"/>
</dbReference>
<dbReference type="Reactome" id="R-MMU-2173788">
    <property type="pathway name" value="Downregulation of TGF-beta receptor signaling"/>
</dbReference>
<dbReference type="Reactome" id="R-MMU-2173789">
    <property type="pathway name" value="TGF-beta receptor signaling activates SMADs"/>
</dbReference>
<dbReference type="Reactome" id="R-MMU-2173791">
    <property type="pathway name" value="TGF-beta receptor signaling in EMT (epithelial to mesenchymal transition)"/>
</dbReference>
<dbReference type="Reactome" id="R-MMU-5689880">
    <property type="pathway name" value="Ub-specific processing proteases"/>
</dbReference>
<dbReference type="Reactome" id="R-MMU-9839389">
    <property type="pathway name" value="TGFBR3 regulates TGF-beta signaling"/>
</dbReference>
<dbReference type="BioGRID-ORCS" id="21812">
    <property type="hits" value="5 hits in 78 CRISPR screens"/>
</dbReference>
<dbReference type="ChiTaRS" id="Tgfbr1">
    <property type="organism name" value="mouse"/>
</dbReference>
<dbReference type="PRO" id="PR:Q64729"/>
<dbReference type="Proteomes" id="UP000000589">
    <property type="component" value="Chromosome 4"/>
</dbReference>
<dbReference type="RNAct" id="Q64729">
    <property type="molecule type" value="protein"/>
</dbReference>
<dbReference type="Bgee" id="ENSMUSG00000007613">
    <property type="expression patterns" value="Expressed in metanephric cortical collecting duct and 279 other cell types or tissues"/>
</dbReference>
<dbReference type="ExpressionAtlas" id="Q64729">
    <property type="expression patterns" value="baseline and differential"/>
</dbReference>
<dbReference type="GO" id="GO:0005923">
    <property type="term" value="C:bicellular tight junction"/>
    <property type="evidence" value="ECO:0007669"/>
    <property type="project" value="UniProtKB-SubCell"/>
</dbReference>
<dbReference type="GO" id="GO:0005901">
    <property type="term" value="C:caveola"/>
    <property type="evidence" value="ECO:0000266"/>
    <property type="project" value="MGI"/>
</dbReference>
<dbReference type="GO" id="GO:0009986">
    <property type="term" value="C:cell surface"/>
    <property type="evidence" value="ECO:0000250"/>
    <property type="project" value="UniProtKB"/>
</dbReference>
<dbReference type="GO" id="GO:0005929">
    <property type="term" value="C:cilium"/>
    <property type="evidence" value="ECO:0007669"/>
    <property type="project" value="Ensembl"/>
</dbReference>
<dbReference type="GO" id="GO:0005768">
    <property type="term" value="C:endosome"/>
    <property type="evidence" value="ECO:0000314"/>
    <property type="project" value="UniProtKB"/>
</dbReference>
<dbReference type="GO" id="GO:0016020">
    <property type="term" value="C:membrane"/>
    <property type="evidence" value="ECO:0000250"/>
    <property type="project" value="AgBase"/>
</dbReference>
<dbReference type="GO" id="GO:0045121">
    <property type="term" value="C:membrane raft"/>
    <property type="evidence" value="ECO:0000250"/>
    <property type="project" value="UniProtKB"/>
</dbReference>
<dbReference type="GO" id="GO:0005654">
    <property type="term" value="C:nucleoplasm"/>
    <property type="evidence" value="ECO:0007669"/>
    <property type="project" value="Ensembl"/>
</dbReference>
<dbReference type="GO" id="GO:0005634">
    <property type="term" value="C:nucleus"/>
    <property type="evidence" value="ECO:0000250"/>
    <property type="project" value="UniProtKB"/>
</dbReference>
<dbReference type="GO" id="GO:0005886">
    <property type="term" value="C:plasma membrane"/>
    <property type="evidence" value="ECO:0000250"/>
    <property type="project" value="UniProtKB"/>
</dbReference>
<dbReference type="GO" id="GO:0070021">
    <property type="term" value="C:transforming growth factor beta ligand-receptor complex"/>
    <property type="evidence" value="ECO:0000266"/>
    <property type="project" value="ComplexPortal"/>
</dbReference>
<dbReference type="GO" id="GO:0005524">
    <property type="term" value="F:ATP binding"/>
    <property type="evidence" value="ECO:0007669"/>
    <property type="project" value="UniProtKB-KW"/>
</dbReference>
<dbReference type="GO" id="GO:0070411">
    <property type="term" value="F:I-SMAD binding"/>
    <property type="evidence" value="ECO:0007669"/>
    <property type="project" value="Ensembl"/>
</dbReference>
<dbReference type="GO" id="GO:0046872">
    <property type="term" value="F:metal ion binding"/>
    <property type="evidence" value="ECO:0007669"/>
    <property type="project" value="UniProtKB-KW"/>
</dbReference>
<dbReference type="GO" id="GO:0005102">
    <property type="term" value="F:signaling receptor binding"/>
    <property type="evidence" value="ECO:0000353"/>
    <property type="project" value="UniProtKB"/>
</dbReference>
<dbReference type="GO" id="GO:0046332">
    <property type="term" value="F:SMAD binding"/>
    <property type="evidence" value="ECO:0000314"/>
    <property type="project" value="BHF-UCL"/>
</dbReference>
<dbReference type="GO" id="GO:0050431">
    <property type="term" value="F:transforming growth factor beta binding"/>
    <property type="evidence" value="ECO:0000353"/>
    <property type="project" value="MGI"/>
</dbReference>
<dbReference type="GO" id="GO:0005024">
    <property type="term" value="F:transforming growth factor beta receptor activity"/>
    <property type="evidence" value="ECO:0000314"/>
    <property type="project" value="UniProtKB"/>
</dbReference>
<dbReference type="GO" id="GO:0005025">
    <property type="term" value="F:transforming growth factor beta receptor activity, type I"/>
    <property type="evidence" value="ECO:0000250"/>
    <property type="project" value="AgBase"/>
</dbReference>
<dbReference type="GO" id="GO:0005114">
    <property type="term" value="F:type II transforming growth factor beta receptor binding"/>
    <property type="evidence" value="ECO:0007669"/>
    <property type="project" value="Ensembl"/>
</dbReference>
<dbReference type="GO" id="GO:0031625">
    <property type="term" value="F:ubiquitin protein ligase binding"/>
    <property type="evidence" value="ECO:0007669"/>
    <property type="project" value="Ensembl"/>
</dbReference>
<dbReference type="GO" id="GO:0032924">
    <property type="term" value="P:activin receptor signaling pathway"/>
    <property type="evidence" value="ECO:0000250"/>
    <property type="project" value="AgBase"/>
</dbReference>
<dbReference type="GO" id="GO:0001525">
    <property type="term" value="P:angiogenesis"/>
    <property type="evidence" value="ECO:0000315"/>
    <property type="project" value="MGI"/>
</dbReference>
<dbReference type="GO" id="GO:0060978">
    <property type="term" value="P:angiogenesis involved in coronary vascular morphogenesis"/>
    <property type="evidence" value="ECO:0000315"/>
    <property type="project" value="BHF-UCL"/>
</dbReference>
<dbReference type="GO" id="GO:0009952">
    <property type="term" value="P:anterior/posterior pattern specification"/>
    <property type="evidence" value="ECO:0000316"/>
    <property type="project" value="MGI"/>
</dbReference>
<dbReference type="GO" id="GO:0006915">
    <property type="term" value="P:apoptotic process"/>
    <property type="evidence" value="ECO:0000315"/>
    <property type="project" value="MGI"/>
</dbReference>
<dbReference type="GO" id="GO:0048844">
    <property type="term" value="P:artery morphogenesis"/>
    <property type="evidence" value="ECO:0000315"/>
    <property type="project" value="MGI"/>
</dbReference>
<dbReference type="GO" id="GO:0001824">
    <property type="term" value="P:blastocyst development"/>
    <property type="evidence" value="ECO:0000314"/>
    <property type="project" value="MGI"/>
</dbReference>
<dbReference type="GO" id="GO:0060317">
    <property type="term" value="P:cardiac epithelial to mesenchymal transition"/>
    <property type="evidence" value="ECO:0000250"/>
    <property type="project" value="AgBase"/>
</dbReference>
<dbReference type="GO" id="GO:0071560">
    <property type="term" value="P:cellular response to transforming growth factor beta stimulus"/>
    <property type="evidence" value="ECO:0000314"/>
    <property type="project" value="BHF-UCL"/>
</dbReference>
<dbReference type="GO" id="GO:0030199">
    <property type="term" value="P:collagen fibril organization"/>
    <property type="evidence" value="ECO:0000315"/>
    <property type="project" value="MGI"/>
</dbReference>
<dbReference type="GO" id="GO:0060982">
    <property type="term" value="P:coronary artery morphogenesis"/>
    <property type="evidence" value="ECO:0000315"/>
    <property type="project" value="BHF-UCL"/>
</dbReference>
<dbReference type="GO" id="GO:0048701">
    <property type="term" value="P:embryonic cranial skeleton morphogenesis"/>
    <property type="evidence" value="ECO:0000315"/>
    <property type="project" value="MGI"/>
</dbReference>
<dbReference type="GO" id="GO:0042118">
    <property type="term" value="P:endothelial cell activation"/>
    <property type="evidence" value="ECO:0000250"/>
    <property type="project" value="AgBase"/>
</dbReference>
<dbReference type="GO" id="GO:0043542">
    <property type="term" value="P:endothelial cell migration"/>
    <property type="evidence" value="ECO:0000315"/>
    <property type="project" value="MGI"/>
</dbReference>
<dbReference type="GO" id="GO:0001935">
    <property type="term" value="P:endothelial cell proliferation"/>
    <property type="evidence" value="ECO:0000316"/>
    <property type="project" value="MGI"/>
</dbReference>
<dbReference type="GO" id="GO:1905223">
    <property type="term" value="P:epicardium morphogenesis"/>
    <property type="evidence" value="ECO:0000315"/>
    <property type="project" value="BHF-UCL"/>
</dbReference>
<dbReference type="GO" id="GO:0046847">
    <property type="term" value="P:filopodium assembly"/>
    <property type="evidence" value="ECO:0000315"/>
    <property type="project" value="MGI"/>
</dbReference>
<dbReference type="GO" id="GO:0008354">
    <property type="term" value="P:germ cell migration"/>
    <property type="evidence" value="ECO:0000315"/>
    <property type="project" value="MGI"/>
</dbReference>
<dbReference type="GO" id="GO:0007507">
    <property type="term" value="P:heart development"/>
    <property type="evidence" value="ECO:0000315"/>
    <property type="project" value="MGI"/>
</dbReference>
<dbReference type="GO" id="GO:0001701">
    <property type="term" value="P:in utero embryonic development"/>
    <property type="evidence" value="ECO:0000315"/>
    <property type="project" value="MGI"/>
</dbReference>
<dbReference type="GO" id="GO:0035556">
    <property type="term" value="P:intracellular signal transduction"/>
    <property type="evidence" value="ECO:0000250"/>
    <property type="project" value="AgBase"/>
</dbReference>
<dbReference type="GO" id="GO:0001822">
    <property type="term" value="P:kidney development"/>
    <property type="evidence" value="ECO:0000316"/>
    <property type="project" value="MGI"/>
</dbReference>
<dbReference type="GO" id="GO:0002088">
    <property type="term" value="P:lens development in camera-type eye"/>
    <property type="evidence" value="ECO:0000315"/>
    <property type="project" value="MGI"/>
</dbReference>
<dbReference type="GO" id="GO:0008584">
    <property type="term" value="P:male gonad development"/>
    <property type="evidence" value="ECO:0000315"/>
    <property type="project" value="MGI"/>
</dbReference>
<dbReference type="GO" id="GO:0048762">
    <property type="term" value="P:mesenchymal cell differentiation"/>
    <property type="evidence" value="ECO:0000250"/>
    <property type="project" value="AgBase"/>
</dbReference>
<dbReference type="GO" id="GO:0036446">
    <property type="term" value="P:myofibroblast differentiation"/>
    <property type="evidence" value="ECO:0007669"/>
    <property type="project" value="Ensembl"/>
</dbReference>
<dbReference type="GO" id="GO:0043066">
    <property type="term" value="P:negative regulation of apoptotic process"/>
    <property type="evidence" value="ECO:0000315"/>
    <property type="project" value="MGI"/>
</dbReference>
<dbReference type="GO" id="GO:0030336">
    <property type="term" value="P:negative regulation of cell migration"/>
    <property type="evidence" value="ECO:0007669"/>
    <property type="project" value="Ensembl"/>
</dbReference>
<dbReference type="GO" id="GO:0032331">
    <property type="term" value="P:negative regulation of chondrocyte differentiation"/>
    <property type="evidence" value="ECO:0000315"/>
    <property type="project" value="BHF-UCL"/>
</dbReference>
<dbReference type="GO" id="GO:0001937">
    <property type="term" value="P:negative regulation of endothelial cell proliferation"/>
    <property type="evidence" value="ECO:0000316"/>
    <property type="project" value="MGI"/>
</dbReference>
<dbReference type="GO" id="GO:2001237">
    <property type="term" value="P:negative regulation of extrinsic apoptotic signaling pathway"/>
    <property type="evidence" value="ECO:0007669"/>
    <property type="project" value="Ensembl"/>
</dbReference>
<dbReference type="GO" id="GO:0048663">
    <property type="term" value="P:neuron fate commitment"/>
    <property type="evidence" value="ECO:0000315"/>
    <property type="project" value="MGI"/>
</dbReference>
<dbReference type="GO" id="GO:0060017">
    <property type="term" value="P:parathyroid gland development"/>
    <property type="evidence" value="ECO:0000315"/>
    <property type="project" value="MGI"/>
</dbReference>
<dbReference type="GO" id="GO:0060037">
    <property type="term" value="P:pharyngeal system development"/>
    <property type="evidence" value="ECO:0000315"/>
    <property type="project" value="MGI"/>
</dbReference>
<dbReference type="GO" id="GO:0043065">
    <property type="term" value="P:positive regulation of apoptotic process"/>
    <property type="evidence" value="ECO:0000314"/>
    <property type="project" value="BHF-UCL"/>
</dbReference>
<dbReference type="GO" id="GO:2001235">
    <property type="term" value="P:positive regulation of apoptotic signaling pathway"/>
    <property type="evidence" value="ECO:0007669"/>
    <property type="project" value="Ensembl"/>
</dbReference>
<dbReference type="GO" id="GO:0030307">
    <property type="term" value="P:positive regulation of cell growth"/>
    <property type="evidence" value="ECO:0007669"/>
    <property type="project" value="Ensembl"/>
</dbReference>
<dbReference type="GO" id="GO:0030335">
    <property type="term" value="P:positive regulation of cell migration"/>
    <property type="evidence" value="ECO:0007669"/>
    <property type="project" value="Ensembl"/>
</dbReference>
<dbReference type="GO" id="GO:0045893">
    <property type="term" value="P:positive regulation of DNA-templated transcription"/>
    <property type="evidence" value="ECO:0000250"/>
    <property type="project" value="AgBase"/>
</dbReference>
<dbReference type="GO" id="GO:0001938">
    <property type="term" value="P:positive regulation of endothelial cell proliferation"/>
    <property type="evidence" value="ECO:0000250"/>
    <property type="project" value="AgBase"/>
</dbReference>
<dbReference type="GO" id="GO:0010718">
    <property type="term" value="P:positive regulation of epithelial to mesenchymal transition"/>
    <property type="evidence" value="ECO:0000316"/>
    <property type="project" value="BHF-UCL"/>
</dbReference>
<dbReference type="GO" id="GO:1905007">
    <property type="term" value="P:positive regulation of epithelial to mesenchymal transition involved in endocardial cushion formation"/>
    <property type="evidence" value="ECO:0000315"/>
    <property type="project" value="BHF-UCL"/>
</dbReference>
<dbReference type="GO" id="GO:1901203">
    <property type="term" value="P:positive regulation of extracellular matrix assembly"/>
    <property type="evidence" value="ECO:0007669"/>
    <property type="project" value="Ensembl"/>
</dbReference>
<dbReference type="GO" id="GO:0051491">
    <property type="term" value="P:positive regulation of filopodium assembly"/>
    <property type="evidence" value="ECO:0000315"/>
    <property type="project" value="MGI"/>
</dbReference>
<dbReference type="GO" id="GO:0010628">
    <property type="term" value="P:positive regulation of gene expression"/>
    <property type="evidence" value="ECO:0000250"/>
    <property type="project" value="AgBase"/>
</dbReference>
<dbReference type="GO" id="GO:1902462">
    <property type="term" value="P:positive regulation of mesenchymal stem cell proliferation"/>
    <property type="evidence" value="ECO:0007669"/>
    <property type="project" value="Ensembl"/>
</dbReference>
<dbReference type="GO" id="GO:0051897">
    <property type="term" value="P:positive regulation of phosphatidylinositol 3-kinase/protein kinase B signal transduction"/>
    <property type="evidence" value="ECO:0007669"/>
    <property type="project" value="Ensembl"/>
</dbReference>
<dbReference type="GO" id="GO:0060391">
    <property type="term" value="P:positive regulation of SMAD protein signal transduction"/>
    <property type="evidence" value="ECO:0007669"/>
    <property type="project" value="Ensembl"/>
</dbReference>
<dbReference type="GO" id="GO:0051496">
    <property type="term" value="P:positive regulation of stress fiber assembly"/>
    <property type="evidence" value="ECO:0000316"/>
    <property type="project" value="BHF-UCL"/>
</dbReference>
<dbReference type="GO" id="GO:1905075">
    <property type="term" value="P:positive regulation of tight junction disassembly"/>
    <property type="evidence" value="ECO:0000316"/>
    <property type="project" value="BHF-UCL"/>
</dbReference>
<dbReference type="GO" id="GO:1904018">
    <property type="term" value="P:positive regulation of vasculature development"/>
    <property type="evidence" value="ECO:0007669"/>
    <property type="project" value="Ensembl"/>
</dbReference>
<dbReference type="GO" id="GO:0009791">
    <property type="term" value="P:post-embryonic development"/>
    <property type="evidence" value="ECO:0000315"/>
    <property type="project" value="MGI"/>
</dbReference>
<dbReference type="GO" id="GO:0060043">
    <property type="term" value="P:regulation of cardiac muscle cell proliferation"/>
    <property type="evidence" value="ECO:0000315"/>
    <property type="project" value="BHF-UCL"/>
</dbReference>
<dbReference type="GO" id="GO:0010717">
    <property type="term" value="P:regulation of epithelial to mesenchymal transition"/>
    <property type="evidence" value="ECO:0000250"/>
    <property type="project" value="AgBase"/>
</dbReference>
<dbReference type="GO" id="GO:0010468">
    <property type="term" value="P:regulation of gene expression"/>
    <property type="evidence" value="ECO:0000315"/>
    <property type="project" value="MGI"/>
</dbReference>
<dbReference type="GO" id="GO:0031396">
    <property type="term" value="P:regulation of protein ubiquitination"/>
    <property type="evidence" value="ECO:0007669"/>
    <property type="project" value="Ensembl"/>
</dbReference>
<dbReference type="GO" id="GO:0070723">
    <property type="term" value="P:response to cholesterol"/>
    <property type="evidence" value="ECO:0000314"/>
    <property type="project" value="BHF-UCL"/>
</dbReference>
<dbReference type="GO" id="GO:0060021">
    <property type="term" value="P:roof of mouth development"/>
    <property type="evidence" value="ECO:0000315"/>
    <property type="project" value="MGI"/>
</dbReference>
<dbReference type="GO" id="GO:0001501">
    <property type="term" value="P:skeletal system development"/>
    <property type="evidence" value="ECO:0000316"/>
    <property type="project" value="MGI"/>
</dbReference>
<dbReference type="GO" id="GO:0048705">
    <property type="term" value="P:skeletal system morphogenesis"/>
    <property type="evidence" value="ECO:0000316"/>
    <property type="project" value="MGI"/>
</dbReference>
<dbReference type="GO" id="GO:0060395">
    <property type="term" value="P:SMAD protein signal transduction"/>
    <property type="evidence" value="ECO:0000266"/>
    <property type="project" value="MGI"/>
</dbReference>
<dbReference type="GO" id="GO:0048538">
    <property type="term" value="P:thymus development"/>
    <property type="evidence" value="ECO:0000315"/>
    <property type="project" value="MGI"/>
</dbReference>
<dbReference type="GO" id="GO:0007179">
    <property type="term" value="P:transforming growth factor beta receptor signaling pathway"/>
    <property type="evidence" value="ECO:0000314"/>
    <property type="project" value="MGI"/>
</dbReference>
<dbReference type="GO" id="GO:0061450">
    <property type="term" value="P:trophoblast cell migration"/>
    <property type="evidence" value="ECO:0007669"/>
    <property type="project" value="Ensembl"/>
</dbReference>
<dbReference type="GO" id="GO:0003223">
    <property type="term" value="P:ventricular compact myocardium morphogenesis"/>
    <property type="evidence" value="ECO:0000315"/>
    <property type="project" value="BHF-UCL"/>
</dbReference>
<dbReference type="GO" id="GO:0060412">
    <property type="term" value="P:ventricular septum morphogenesis"/>
    <property type="evidence" value="ECO:0000315"/>
    <property type="project" value="BHF-UCL"/>
</dbReference>
<dbReference type="GO" id="GO:0003222">
    <property type="term" value="P:ventricular trabecula myocardium morphogenesis"/>
    <property type="evidence" value="ECO:0000315"/>
    <property type="project" value="BHF-UCL"/>
</dbReference>
<dbReference type="CDD" id="cd14143">
    <property type="entry name" value="STKc_TGFbR1_ACVR1b_ACVR1c"/>
    <property type="match status" value="1"/>
</dbReference>
<dbReference type="CDD" id="cd23537">
    <property type="entry name" value="TFP_LU_ECD_ALK5"/>
    <property type="match status" value="1"/>
</dbReference>
<dbReference type="FunFam" id="1.10.510.10:FF:000045">
    <property type="entry name" value="Receptor protein serine/threonine kinase"/>
    <property type="match status" value="1"/>
</dbReference>
<dbReference type="FunFam" id="2.10.60.10:FF:000005">
    <property type="entry name" value="Receptor protein serine/threonine kinase"/>
    <property type="match status" value="1"/>
</dbReference>
<dbReference type="FunFam" id="3.30.200.20:FF:000023">
    <property type="entry name" value="Receptor protein serine/threonine kinase"/>
    <property type="match status" value="1"/>
</dbReference>
<dbReference type="Gene3D" id="2.10.60.10">
    <property type="entry name" value="CD59"/>
    <property type="match status" value="1"/>
</dbReference>
<dbReference type="Gene3D" id="3.30.200.20">
    <property type="entry name" value="Phosphorylase Kinase, domain 1"/>
    <property type="match status" value="1"/>
</dbReference>
<dbReference type="Gene3D" id="1.10.510.10">
    <property type="entry name" value="Transferase(Phosphotransferase) domain 1"/>
    <property type="match status" value="1"/>
</dbReference>
<dbReference type="InterPro" id="IPR000472">
    <property type="entry name" value="Activin_recp"/>
</dbReference>
<dbReference type="InterPro" id="IPR003605">
    <property type="entry name" value="GS_dom"/>
</dbReference>
<dbReference type="InterPro" id="IPR011009">
    <property type="entry name" value="Kinase-like_dom_sf"/>
</dbReference>
<dbReference type="InterPro" id="IPR000719">
    <property type="entry name" value="Prot_kinase_dom"/>
</dbReference>
<dbReference type="InterPro" id="IPR017441">
    <property type="entry name" value="Protein_kinase_ATP_BS"/>
</dbReference>
<dbReference type="InterPro" id="IPR008271">
    <property type="entry name" value="Ser/Thr_kinase_AS"/>
</dbReference>
<dbReference type="InterPro" id="IPR045860">
    <property type="entry name" value="Snake_toxin-like_sf"/>
</dbReference>
<dbReference type="InterPro" id="IPR000333">
    <property type="entry name" value="TGFB_receptor"/>
</dbReference>
<dbReference type="PANTHER" id="PTHR23255:SF61">
    <property type="entry name" value="TGF-BETA RECEPTOR TYPE-1"/>
    <property type="match status" value="1"/>
</dbReference>
<dbReference type="PANTHER" id="PTHR23255">
    <property type="entry name" value="TRANSFORMING GROWTH FACTOR-BETA RECEPTOR TYPE I AND II"/>
    <property type="match status" value="1"/>
</dbReference>
<dbReference type="Pfam" id="PF01064">
    <property type="entry name" value="Activin_recp"/>
    <property type="match status" value="1"/>
</dbReference>
<dbReference type="Pfam" id="PF00069">
    <property type="entry name" value="Pkinase"/>
    <property type="match status" value="1"/>
</dbReference>
<dbReference type="Pfam" id="PF08515">
    <property type="entry name" value="TGF_beta_GS"/>
    <property type="match status" value="1"/>
</dbReference>
<dbReference type="SMART" id="SM00467">
    <property type="entry name" value="GS"/>
    <property type="match status" value="1"/>
</dbReference>
<dbReference type="SMART" id="SM00220">
    <property type="entry name" value="S_TKc"/>
    <property type="match status" value="1"/>
</dbReference>
<dbReference type="SUPFAM" id="SSF56112">
    <property type="entry name" value="Protein kinase-like (PK-like)"/>
    <property type="match status" value="1"/>
</dbReference>
<dbReference type="SUPFAM" id="SSF57302">
    <property type="entry name" value="Snake toxin-like"/>
    <property type="match status" value="1"/>
</dbReference>
<dbReference type="PROSITE" id="PS51256">
    <property type="entry name" value="GS"/>
    <property type="match status" value="1"/>
</dbReference>
<dbReference type="PROSITE" id="PS00107">
    <property type="entry name" value="PROTEIN_KINASE_ATP"/>
    <property type="match status" value="1"/>
</dbReference>
<dbReference type="PROSITE" id="PS50011">
    <property type="entry name" value="PROTEIN_KINASE_DOM"/>
    <property type="match status" value="1"/>
</dbReference>
<dbReference type="PROSITE" id="PS00108">
    <property type="entry name" value="PROTEIN_KINASE_ST"/>
    <property type="match status" value="1"/>
</dbReference>
<evidence type="ECO:0000250" key="1"/>
<evidence type="ECO:0000250" key="2">
    <source>
        <dbReference type="UniProtKB" id="P36897"/>
    </source>
</evidence>
<evidence type="ECO:0000255" key="3"/>
<evidence type="ECO:0000255" key="4">
    <source>
        <dbReference type="PROSITE-ProRule" id="PRU00159"/>
    </source>
</evidence>
<evidence type="ECO:0000255" key="5">
    <source>
        <dbReference type="PROSITE-ProRule" id="PRU00585"/>
    </source>
</evidence>
<evidence type="ECO:0000255" key="6">
    <source>
        <dbReference type="PROSITE-ProRule" id="PRU10027"/>
    </source>
</evidence>
<evidence type="ECO:0000303" key="7">
    <source>
    </source>
</evidence>
<evidence type="ECO:0000305" key="8"/>
<reference key="1">
    <citation type="journal article" date="1994" name="Biochem. Biophys. Res. Commun.">
        <title>Molecular cloning of a mouse counterpart for human TGF-beta type I receptor.</title>
        <authorList>
            <person name="Tomoda T."/>
            <person name="Kudoh T."/>
            <person name="Noma T."/>
            <person name="Nakazawa A."/>
            <person name="Muramatsu M.-A."/>
            <person name="Arai K."/>
        </authorList>
    </citation>
    <scope>NUCLEOTIDE SEQUENCE [MRNA] (ISOFORM 1)</scope>
    <source>
        <tissue>Brain</tissue>
        <tissue>Testis</tissue>
    </source>
</reference>
<reference key="2">
    <citation type="journal article" date="1994" name="Biochem. Biophys. Res. Commun.">
        <title>A mouse TGF-beta type I receptor that requires type II receptor for ligand binding.</title>
        <authorList>
            <person name="Suzuki A."/>
            <person name="Shioda N."/>
            <person name="Maeda T."/>
            <person name="Tada M."/>
            <person name="Ueno N."/>
        </authorList>
    </citation>
    <scope>NUCLEOTIDE SEQUENCE [MRNA] (ISOFORM 2)</scope>
    <source>
        <tissue>Brain</tissue>
    </source>
</reference>
<reference key="3">
    <citation type="journal article" date="2009" name="PLoS Biol.">
        <title>Lineage-specific biology revealed by a finished genome assembly of the mouse.</title>
        <authorList>
            <person name="Church D.M."/>
            <person name="Goodstadt L."/>
            <person name="Hillier L.W."/>
            <person name="Zody M.C."/>
            <person name="Goldstein S."/>
            <person name="She X."/>
            <person name="Bult C.J."/>
            <person name="Agarwala R."/>
            <person name="Cherry J.L."/>
            <person name="DiCuccio M."/>
            <person name="Hlavina W."/>
            <person name="Kapustin Y."/>
            <person name="Meric P."/>
            <person name="Maglott D."/>
            <person name="Birtle Z."/>
            <person name="Marques A.C."/>
            <person name="Graves T."/>
            <person name="Zhou S."/>
            <person name="Teague B."/>
            <person name="Potamousis K."/>
            <person name="Churas C."/>
            <person name="Place M."/>
            <person name="Herschleb J."/>
            <person name="Runnheim R."/>
            <person name="Forrest D."/>
            <person name="Amos-Landgraf J."/>
            <person name="Schwartz D.C."/>
            <person name="Cheng Z."/>
            <person name="Lindblad-Toh K."/>
            <person name="Eichler E.E."/>
            <person name="Ponting C.P."/>
        </authorList>
    </citation>
    <scope>NUCLEOTIDE SEQUENCE [LARGE SCALE GENOMIC DNA]</scope>
    <source>
        <strain>C57BL/6J</strain>
    </source>
</reference>
<reference key="4">
    <citation type="journal article" date="2004" name="Genome Res.">
        <title>The status, quality, and expansion of the NIH full-length cDNA project: the Mammalian Gene Collection (MGC).</title>
        <authorList>
            <consortium name="The MGC Project Team"/>
        </authorList>
    </citation>
    <scope>NUCLEOTIDE SEQUENCE [LARGE SCALE MRNA] (ISOFORM 1)</scope>
    <source>
        <strain>C57BL/6J</strain>
        <tissue>Brain</tissue>
    </source>
</reference>
<name>TGFR1_MOUSE</name>
<feature type="signal peptide" evidence="1">
    <location>
        <begin position="1"/>
        <end position="29"/>
    </location>
</feature>
<feature type="chain" id="PRO_0000024424" description="TGF-beta receptor type-1">
    <location>
        <begin position="30"/>
        <end position="503"/>
    </location>
</feature>
<feature type="topological domain" description="Extracellular" evidence="3">
    <location>
        <begin position="30"/>
        <end position="126"/>
    </location>
</feature>
<feature type="transmembrane region" description="Helical" evidence="3">
    <location>
        <begin position="127"/>
        <end position="147"/>
    </location>
</feature>
<feature type="topological domain" description="Cytoplasmic" evidence="3">
    <location>
        <begin position="148"/>
        <end position="503"/>
    </location>
</feature>
<feature type="domain" description="GS" evidence="5">
    <location>
        <begin position="175"/>
        <end position="204"/>
    </location>
</feature>
<feature type="domain" description="Protein kinase" evidence="4">
    <location>
        <begin position="205"/>
        <end position="495"/>
    </location>
</feature>
<feature type="short sequence motif" description="FKBP1A-binding">
    <location>
        <begin position="193"/>
        <end position="194"/>
    </location>
</feature>
<feature type="active site" description="Proton acceptor" evidence="4 6">
    <location>
        <position position="333"/>
    </location>
</feature>
<feature type="binding site" evidence="4">
    <location>
        <begin position="211"/>
        <end position="219"/>
    </location>
    <ligand>
        <name>ATP</name>
        <dbReference type="ChEBI" id="CHEBI:30616"/>
    </ligand>
</feature>
<feature type="binding site" evidence="4">
    <location>
        <position position="232"/>
    </location>
    <ligand>
        <name>ATP</name>
        <dbReference type="ChEBI" id="CHEBI:30616"/>
    </ligand>
</feature>
<feature type="modified residue" description="Phosphoserine" evidence="2">
    <location>
        <position position="165"/>
    </location>
</feature>
<feature type="modified residue" description="Phosphothreonine; by TGFBR2" evidence="2">
    <location>
        <position position="185"/>
    </location>
</feature>
<feature type="modified residue" description="Phosphothreonine; by TGFBR2" evidence="2">
    <location>
        <position position="186"/>
    </location>
</feature>
<feature type="modified residue" description="Phosphoserine; by TGFBR2" evidence="2">
    <location>
        <position position="187"/>
    </location>
</feature>
<feature type="modified residue" description="Phosphoserine; by TGFBR2" evidence="2">
    <location>
        <position position="189"/>
    </location>
</feature>
<feature type="modified residue" description="Phosphoserine; by TGFBR2" evidence="2">
    <location>
        <position position="191"/>
    </location>
</feature>
<feature type="glycosylation site" description="N-linked (GlcNAc...) asparagine" evidence="3">
    <location>
        <position position="41"/>
    </location>
</feature>
<feature type="disulfide bond" evidence="2">
    <location>
        <begin position="32"/>
        <end position="50"/>
    </location>
</feature>
<feature type="disulfide bond" evidence="2">
    <location>
        <begin position="34"/>
        <end position="37"/>
    </location>
</feature>
<feature type="disulfide bond" evidence="2">
    <location>
        <begin position="44"/>
        <end position="67"/>
    </location>
</feature>
<feature type="disulfide bond" evidence="2">
    <location>
        <begin position="82"/>
        <end position="96"/>
    </location>
</feature>
<feature type="disulfide bond" evidence="2">
    <location>
        <begin position="97"/>
        <end position="102"/>
    </location>
</feature>
<feature type="cross-link" description="Glycyl lysine isopeptide (Lys-Gly) (interchain with G-Cter in ubiquitin)" evidence="2">
    <location>
        <position position="268"/>
    </location>
</feature>
<feature type="cross-link" description="Glycyl lysine isopeptide (Lys-Gly) (interchain with G-Cter in SUMO)" evidence="1">
    <location>
        <position position="391"/>
    </location>
</feature>
<feature type="splice variant" id="VSP_021593" description="In isoform 2." evidence="7">
    <location>
        <begin position="111"/>
        <end position="114"/>
    </location>
</feature>
<gene>
    <name type="primary">Tgfbr1</name>
</gene>
<organism>
    <name type="scientific">Mus musculus</name>
    <name type="common">Mouse</name>
    <dbReference type="NCBI Taxonomy" id="10090"/>
    <lineage>
        <taxon>Eukaryota</taxon>
        <taxon>Metazoa</taxon>
        <taxon>Chordata</taxon>
        <taxon>Craniata</taxon>
        <taxon>Vertebrata</taxon>
        <taxon>Euteleostomi</taxon>
        <taxon>Mammalia</taxon>
        <taxon>Eutheria</taxon>
        <taxon>Euarchontoglires</taxon>
        <taxon>Glires</taxon>
        <taxon>Rodentia</taxon>
        <taxon>Myomorpha</taxon>
        <taxon>Muroidea</taxon>
        <taxon>Muridae</taxon>
        <taxon>Murinae</taxon>
        <taxon>Mus</taxon>
        <taxon>Mus</taxon>
    </lineage>
</organism>
<proteinExistence type="evidence at protein level"/>
<accession>Q64729</accession>
<accession>A2AJN0</accession>
<protein>
    <recommendedName>
        <fullName>TGF-beta receptor type-1</fullName>
        <shortName>TGFR-1</shortName>
        <ecNumber>2.7.11.30</ecNumber>
    </recommendedName>
    <alternativeName>
        <fullName>ESK2</fullName>
    </alternativeName>
    <alternativeName>
        <fullName>Transforming growth factor-beta receptor type I</fullName>
        <shortName>TGF-beta receptor type I</shortName>
        <shortName>TbetaR-I</shortName>
    </alternativeName>
</protein>
<keyword id="KW-0025">Alternative splicing</keyword>
<keyword id="KW-0053">Apoptosis</keyword>
<keyword id="KW-0067">ATP-binding</keyword>
<keyword id="KW-0965">Cell junction</keyword>
<keyword id="KW-1003">Cell membrane</keyword>
<keyword id="KW-0221">Differentiation</keyword>
<keyword id="KW-1015">Disulfide bond</keyword>
<keyword id="KW-0325">Glycoprotein</keyword>
<keyword id="KW-0341">Growth regulation</keyword>
<keyword id="KW-1017">Isopeptide bond</keyword>
<keyword id="KW-0418">Kinase</keyword>
<keyword id="KW-0460">Magnesium</keyword>
<keyword id="KW-0464">Manganese</keyword>
<keyword id="KW-0472">Membrane</keyword>
<keyword id="KW-0479">Metal-binding</keyword>
<keyword id="KW-0547">Nucleotide-binding</keyword>
<keyword id="KW-0597">Phosphoprotein</keyword>
<keyword id="KW-0675">Receptor</keyword>
<keyword id="KW-1185">Reference proteome</keyword>
<keyword id="KW-0723">Serine/threonine-protein kinase</keyword>
<keyword id="KW-0732">Signal</keyword>
<keyword id="KW-0796">Tight junction</keyword>
<keyword id="KW-0808">Transferase</keyword>
<keyword id="KW-0812">Transmembrane</keyword>
<keyword id="KW-1133">Transmembrane helix</keyword>
<keyword id="KW-0832">Ubl conjugation</keyword>
<comment type="function">
    <text evidence="2">Transmembrane serine/threonine kinase forming with the TGF-beta type II serine/threonine kinase receptor, TGFBR2, the non-promiscuous receptor for the TGF-beta cytokines TGFB1, TGFB2 and TGFB3. Transduces the TGFB1, TGFB2 and TGFB3 signal from the cell surface to the cytoplasm and is thus regulating a plethora of physiological and pathological processes including cell cycle arrest in epithelial and hematopoietic cells, control of mesenchymal cell proliferation and differentiation, wound healing, extracellular matrix production, immunosuppression and carcinogenesis. The formation of the receptor complex composed of 2 TGFBR1 and 2 TGFBR2 molecules symmetrically bound to the cytokine dimer results in the phosphorylation and the activation of TGFBR1 by the constitutively active TGFBR2. Activated TGFBR1 phosphorylates SMAD2 which dissociates from the receptor and interacts with SMAD4. The SMAD2-SMAD4 complex is subsequently translocated to the nucleus where it modulates the transcription of the TGF-beta-regulated genes. This constitutes the canonical SMAD-dependent TGF-beta signaling cascade. Also involved in non-canonical, SMAD-independent TGF-beta signaling pathways. For instance, TGFBR1 induces TRAF6 autoubiquitination which in turn results in MAP3K7 ubiquitination and activation to trigger apoptosis. Also regulates epithelial to mesenchymal transition through a SMAD-independent signaling pathway through PARD6A phosphorylation and activation (By similarity).</text>
</comment>
<comment type="catalytic activity">
    <reaction>
        <text>L-threonyl-[receptor-protein] + ATP = O-phospho-L-threonyl-[receptor-protein] + ADP + H(+)</text>
        <dbReference type="Rhea" id="RHEA:44880"/>
        <dbReference type="Rhea" id="RHEA-COMP:11024"/>
        <dbReference type="Rhea" id="RHEA-COMP:11025"/>
        <dbReference type="ChEBI" id="CHEBI:15378"/>
        <dbReference type="ChEBI" id="CHEBI:30013"/>
        <dbReference type="ChEBI" id="CHEBI:30616"/>
        <dbReference type="ChEBI" id="CHEBI:61977"/>
        <dbReference type="ChEBI" id="CHEBI:456216"/>
        <dbReference type="EC" id="2.7.11.30"/>
    </reaction>
</comment>
<comment type="catalytic activity">
    <reaction>
        <text>L-seryl-[receptor-protein] + ATP = O-phospho-L-seryl-[receptor-protein] + ADP + H(+)</text>
        <dbReference type="Rhea" id="RHEA:18673"/>
        <dbReference type="Rhea" id="RHEA-COMP:11022"/>
        <dbReference type="Rhea" id="RHEA-COMP:11023"/>
        <dbReference type="ChEBI" id="CHEBI:15378"/>
        <dbReference type="ChEBI" id="CHEBI:29999"/>
        <dbReference type="ChEBI" id="CHEBI:30616"/>
        <dbReference type="ChEBI" id="CHEBI:83421"/>
        <dbReference type="ChEBI" id="CHEBI:456216"/>
        <dbReference type="EC" id="2.7.11.30"/>
    </reaction>
</comment>
<comment type="cofactor">
    <cofactor evidence="1">
        <name>Mg(2+)</name>
        <dbReference type="ChEBI" id="CHEBI:18420"/>
    </cofactor>
    <cofactor evidence="1">
        <name>Mn(2+)</name>
        <dbReference type="ChEBI" id="CHEBI:29035"/>
    </cofactor>
</comment>
<comment type="activity regulation">
    <text evidence="2">Kept in an inactive conformation by FKBP1A preventing receptor activation in absence of ligand. CD109 is another inhibitor of the receptor (By similarity).</text>
</comment>
<comment type="subunit">
    <text evidence="2">Homodimer; in the endoplasmic reticulum but also at the cell membrane. Heterohexamer; TGFB1, TGFB2 and TGFB3 homodimeric ligands assemble a functional receptor composed of two TGFBR1 and TGFBR2 heterodimers to form a ligand-receptor heterohexamer. The respective affinity of TGBRB1 and TGFBR2 for the ligands may modulate the kinetics of assembly of the receptor and may explain the different biological activities of TGFB1, TGFB2 and TGFB3. Component of a complex composed of TSC22D1 (via N-terminus), TGFBR1 and TGFBR2; the interaction between TSC22D1 and TGFBR1 is inhibited by SMAD7 and promoted by TGFB1 (By similarity). Interacts with CD109; inhibits TGF-beta receptor activation in keratinocytes. Interacts with RBPMS. Interacts (unphosphorylated) with FKBP1A; prevents TGFBR1 phosphorylation by TGFBR2 and stabilizes it in the inactive conformation. Interacts with SMAD2, SMAD3 and ZFYVE9; ZFYVE9 recruits SMAD2 and SMAD3 to the TGF-beta receptor. Interacts with TRAF6 and MAP3K7; induces MAP3K7 activation by TRAF6. Interacts with PARD6A; involved in TGF-beta induced epithelial to mesenchymal transition. Interacts with NEDD4L (By similarity). Interacts with SMAD7, SMURF1 and SMURF2; SMAD7 recruits NEDD4L, SMURF1 and SMURF2 to the TGF-beta receptor (By similarity). Interacts with USP15 and VPS39. Interacts with SDCBP (via C-terminus) (By similarity). Interacts with CAV1 and this interaction is impaired in the presence of SDCBP (By similarity). Interacts with APPL1; interaction is TGF beta dependent; mediates trafficking of the TGFBR1 from the endosomes to the nucleus via microtubules in a TRAF6-dependent manner (By similarity). Interacts with GPR50; this interaction promotes the constitutive activation of SMAD signaling pathway (By similarity).</text>
</comment>
<comment type="interaction">
    <interactant intactId="EBI-2899393">
        <id>Q64729</id>
    </interactant>
    <interactant intactId="EBI-775229">
        <id>Q9DBG3</id>
        <label>Ap2b1</label>
    </interactant>
    <organismsDiffer>false</organismsDiffer>
    <experiments>2</experiments>
</comment>
<comment type="interaction">
    <interactant intactId="EBI-2899393">
        <id>Q64729</id>
    </interactant>
    <interactant intactId="EBI-1161338">
        <id>P49817</id>
        <label>Cav1</label>
    </interactant>
    <organismsDiffer>false</organismsDiffer>
    <experiments>4</experiments>
</comment>
<comment type="interaction">
    <interactant intactId="EBI-2899393">
        <id>Q64729</id>
    </interactant>
    <interactant intactId="EBI-7565891">
        <id>P15379</id>
        <label>Cd44</label>
    </interactant>
    <organismsDiffer>false</organismsDiffer>
    <experiments>4</experiments>
</comment>
<comment type="interaction">
    <interactant intactId="EBI-2899393">
        <id>Q64729</id>
    </interactant>
    <interactant intactId="EBI-7087433">
        <id>P55284</id>
        <label>Cdh5</label>
    </interactant>
    <organismsDiffer>false</organismsDiffer>
    <experiments>2</experiments>
</comment>
<comment type="interaction">
    <interactant intactId="EBI-2899393">
        <id>Q64729</id>
    </interactant>
    <interactant intactId="EBI-11600492">
        <id>P05533</id>
        <label>Ly6a</label>
    </interactant>
    <organismsDiffer>false</organismsDiffer>
    <experiments>2</experiments>
</comment>
<comment type="interaction">
    <interactant intactId="EBI-2899393">
        <id>Q64729</id>
    </interactant>
    <interactant intactId="EBI-1019301">
        <id>P98083-2</id>
        <label>Shc1</label>
    </interactant>
    <organismsDiffer>false</organismsDiffer>
    <experiments>7</experiments>
</comment>
<comment type="interaction">
    <interactant intactId="EBI-2899393">
        <id>Q64729</id>
    </interactant>
    <interactant intactId="EBI-2899332">
        <id>Q62312</id>
        <label>Tgfbr2</label>
    </interactant>
    <organismsDiffer>false</organismsDiffer>
    <experiments>3</experiments>
</comment>
<comment type="interaction">
    <interactant intactId="EBI-2899393">
        <id>Q64729</id>
    </interactant>
    <interactant intactId="EBI-432924">
        <id>P63010</id>
        <label>AP2B1</label>
    </interactant>
    <organismsDiffer>true</organismsDiffer>
    <experiments>3</experiments>
</comment>
<comment type="interaction">
    <interactant intactId="EBI-2899393">
        <id>Q64729</id>
    </interactant>
    <interactant intactId="EBI-715138">
        <id>Q8TDM6</id>
        <label>DLG5</label>
    </interactant>
    <organismsDiffer>true</organismsDiffer>
    <experiments>3</experiments>
</comment>
<comment type="interaction">
    <interactant intactId="EBI-2899393">
        <id>Q64729</id>
    </interactant>
    <interactant intactId="EBI-347161">
        <id>P84022</id>
        <label>SMAD3</label>
    </interactant>
    <organismsDiffer>true</organismsDiffer>
    <experiments>6</experiments>
</comment>
<comment type="subcellular location">
    <subcellularLocation>
        <location evidence="2">Cell membrane</location>
        <topology evidence="2">Single-pass type I membrane protein</topology>
    </subcellularLocation>
    <subcellularLocation>
        <location evidence="2">Cell junction</location>
        <location evidence="2">Tight junction</location>
    </subcellularLocation>
    <subcellularLocation>
        <location evidence="2">Membrane raft</location>
    </subcellularLocation>
    <subcellularLocation>
        <location evidence="2">Cell surface</location>
    </subcellularLocation>
</comment>
<comment type="alternative products">
    <event type="alternative splicing"/>
    <isoform>
        <id>Q64729-1</id>
        <name>1</name>
        <sequence type="displayed"/>
    </isoform>
    <isoform>
        <id>Q64729-2</id>
        <name>2</name>
        <sequence type="described" ref="VSP_021593"/>
    </isoform>
</comment>
<comment type="PTM">
    <text evidence="2">Phosphorylated at basal levels in the absence of ligand. Activated upon phosphorylation by TGFBR2, mainly in the GS domain. Phosphorylation in the GS domain abrogates FKBP1A-binding (By similarity).</text>
</comment>
<comment type="PTM">
    <text evidence="2">N-Glycosylated.</text>
</comment>
<comment type="PTM">
    <text evidence="2">Ubiquitinated; undergoes ubiquitination catalyzed by several E3 ubiquitin ligases including SMURF1, SMURF2 and NEDD4L2. Results in the proteasomal and/or lysosomal degradation of the receptor thereby negatively regulating its activity. Deubiquitinated by USP15, leading to stabilization of the protein and enhanced TGF-beta signal. Its ubiquitination and proteasome-mediated degradation is negatively regulated by SDCBP. Ubiquitinated by BFAR via'Lys-63'-linked ubiquitination at Lys-268, leading to TGF-beta signaling activation (By similarity).</text>
</comment>
<comment type="miscellaneous">
    <molecule>Isoform 2</molecule>
    <text evidence="8">May be due to a competing donor splice site.</text>
</comment>
<comment type="similarity">
    <text evidence="8">Belongs to the protein kinase superfamily. TKL Ser/Thr protein kinase family. TGFB receptor subfamily.</text>
</comment>
<sequence length="503" mass="56179">MEAAAAAPRRPQLLIVLVAAATLLPGAKALQCFCHLCTKDNFTCETDGLCFVSVTETTDKVIHNSMCIAEIDLIPRDRPFVCAPSSKTGAVTTTYCCNQDHCNKIELPTTGPFSEKQSAGLGPVELAAVIAGPVCFVCIALMLMVYICHNRTVIHHRVPNEEDPSLDRPFISEGTTLKDLIYDMTTSGSGSGLPLLVQRTIARTIVLQESIGKGRFGEVWRGKWRGEEVAVKIFSSREERSWFREAEIYQTVMLRHENILGFIAADNKDNGTWTQLWLVSDYHEHGSLFDYLNRYTVTVEGMIKLALSTASGLAHLHMEIVGTQGKPAIAHRDLKSKNILVKKNGTCCIADLGLAVRHDSATDTIDIAPNHRVGTKRYMAPEVLDDSINMKHFESFKRADIYAMGLVFWEIARRCSIGGIHEDYQLPYYDLVPSDPSVEEMRKVVCEQKLRPNIPNRWQSCEALRVMAKIMRECWYANGAARLTALRIKKTLSQLSQQEGIKM</sequence>